<evidence type="ECO:0000255" key="1">
    <source>
        <dbReference type="HAMAP-Rule" id="MF_00815"/>
    </source>
</evidence>
<sequence length="292" mass="31802">MPSLKDLRNRIASVKATQKITKAMQMVAAAKLRRAQEAAEAARPYSQRMGAVLANIAQNVSGEDAPALMVGTGKDDVHLLVVCTAKRGLCGGFNSQIARLARDHARKLLAEGKTVKIITVGKKGADILRREFSALLHDHVDLREVKQLAFVHADQIGHKIIKLFEEGAFDVCTLFYSEFKSVISQVSTAQQLIPASADNEAEMETAGDAIYEYEPDPAAILSTLIPRNISVQIFRALLENVAGEMGAKMSAMDNATRNAGDMINKLSITYNRQRQAQITKELIEIISGAEAL</sequence>
<gene>
    <name evidence="1" type="primary">atpG</name>
    <name type="ordered locus">BMEI0250</name>
</gene>
<keyword id="KW-0066">ATP synthesis</keyword>
<keyword id="KW-0997">Cell inner membrane</keyword>
<keyword id="KW-1003">Cell membrane</keyword>
<keyword id="KW-0139">CF(1)</keyword>
<keyword id="KW-0375">Hydrogen ion transport</keyword>
<keyword id="KW-0406">Ion transport</keyword>
<keyword id="KW-0472">Membrane</keyword>
<keyword id="KW-0813">Transport</keyword>
<protein>
    <recommendedName>
        <fullName evidence="1">ATP synthase gamma chain</fullName>
    </recommendedName>
    <alternativeName>
        <fullName evidence="1">ATP synthase F1 sector gamma subunit</fullName>
    </alternativeName>
    <alternativeName>
        <fullName evidence="1">F-ATPase gamma subunit</fullName>
    </alternativeName>
</protein>
<comment type="function">
    <text evidence="1">Produces ATP from ADP in the presence of a proton gradient across the membrane. The gamma chain is believed to be important in regulating ATPase activity and the flow of protons through the CF(0) complex.</text>
</comment>
<comment type="subunit">
    <text evidence="1">F-type ATPases have 2 components, CF(1) - the catalytic core - and CF(0) - the membrane proton channel. CF(1) has five subunits: alpha(3), beta(3), gamma(1), delta(1), epsilon(1). CF(0) has three main subunits: a, b and c.</text>
</comment>
<comment type="subcellular location">
    <subcellularLocation>
        <location evidence="1">Cell inner membrane</location>
        <topology evidence="1">Peripheral membrane protein</topology>
    </subcellularLocation>
</comment>
<comment type="similarity">
    <text evidence="1">Belongs to the ATPase gamma chain family.</text>
</comment>
<accession>Q8YJ36</accession>
<feature type="chain" id="PRO_0000073250" description="ATP synthase gamma chain">
    <location>
        <begin position="1"/>
        <end position="292"/>
    </location>
</feature>
<reference key="1">
    <citation type="journal article" date="2002" name="Proc. Natl. Acad. Sci. U.S.A.">
        <title>The genome sequence of the facultative intracellular pathogen Brucella melitensis.</title>
        <authorList>
            <person name="DelVecchio V.G."/>
            <person name="Kapatral V."/>
            <person name="Redkar R.J."/>
            <person name="Patra G."/>
            <person name="Mujer C."/>
            <person name="Los T."/>
            <person name="Ivanova N."/>
            <person name="Anderson I."/>
            <person name="Bhattacharyya A."/>
            <person name="Lykidis A."/>
            <person name="Reznik G."/>
            <person name="Jablonski L."/>
            <person name="Larsen N."/>
            <person name="D'Souza M."/>
            <person name="Bernal A."/>
            <person name="Mazur M."/>
            <person name="Goltsman E."/>
            <person name="Selkov E."/>
            <person name="Elzer P.H."/>
            <person name="Hagius S."/>
            <person name="O'Callaghan D."/>
            <person name="Letesson J.-J."/>
            <person name="Haselkorn R."/>
            <person name="Kyrpides N.C."/>
            <person name="Overbeek R."/>
        </authorList>
    </citation>
    <scope>NUCLEOTIDE SEQUENCE [LARGE SCALE GENOMIC DNA]</scope>
    <source>
        <strain>ATCC 23456 / CCUG 17765 / NCTC 10094 / 16M</strain>
    </source>
</reference>
<organism>
    <name type="scientific">Brucella melitensis biotype 1 (strain ATCC 23456 / CCUG 17765 / NCTC 10094 / 16M)</name>
    <dbReference type="NCBI Taxonomy" id="224914"/>
    <lineage>
        <taxon>Bacteria</taxon>
        <taxon>Pseudomonadati</taxon>
        <taxon>Pseudomonadota</taxon>
        <taxon>Alphaproteobacteria</taxon>
        <taxon>Hyphomicrobiales</taxon>
        <taxon>Brucellaceae</taxon>
        <taxon>Brucella/Ochrobactrum group</taxon>
        <taxon>Brucella</taxon>
    </lineage>
</organism>
<proteinExistence type="inferred from homology"/>
<dbReference type="EMBL" id="AE008917">
    <property type="protein sequence ID" value="AAL51432.1"/>
    <property type="molecule type" value="Genomic_DNA"/>
</dbReference>
<dbReference type="PIR" id="AE3283">
    <property type="entry name" value="AE3283"/>
</dbReference>
<dbReference type="RefSeq" id="WP_002964877.1">
    <property type="nucleotide sequence ID" value="NZ_GG703781.1"/>
</dbReference>
<dbReference type="SMR" id="Q8YJ36"/>
<dbReference type="KEGG" id="bme:BMEI0250"/>
<dbReference type="KEGG" id="bmel:DK63_1182"/>
<dbReference type="PATRIC" id="fig|224914.52.peg.1249"/>
<dbReference type="eggNOG" id="COG0224">
    <property type="taxonomic scope" value="Bacteria"/>
</dbReference>
<dbReference type="PhylomeDB" id="Q8YJ36"/>
<dbReference type="Proteomes" id="UP000000419">
    <property type="component" value="Chromosome I"/>
</dbReference>
<dbReference type="GO" id="GO:0005886">
    <property type="term" value="C:plasma membrane"/>
    <property type="evidence" value="ECO:0007669"/>
    <property type="project" value="UniProtKB-SubCell"/>
</dbReference>
<dbReference type="GO" id="GO:0045259">
    <property type="term" value="C:proton-transporting ATP synthase complex"/>
    <property type="evidence" value="ECO:0007669"/>
    <property type="project" value="UniProtKB-KW"/>
</dbReference>
<dbReference type="GO" id="GO:0005524">
    <property type="term" value="F:ATP binding"/>
    <property type="evidence" value="ECO:0007669"/>
    <property type="project" value="UniProtKB-UniRule"/>
</dbReference>
<dbReference type="GO" id="GO:0046933">
    <property type="term" value="F:proton-transporting ATP synthase activity, rotational mechanism"/>
    <property type="evidence" value="ECO:0007669"/>
    <property type="project" value="UniProtKB-UniRule"/>
</dbReference>
<dbReference type="GO" id="GO:0042777">
    <property type="term" value="P:proton motive force-driven plasma membrane ATP synthesis"/>
    <property type="evidence" value="ECO:0007669"/>
    <property type="project" value="UniProtKB-UniRule"/>
</dbReference>
<dbReference type="CDD" id="cd12151">
    <property type="entry name" value="F1-ATPase_gamma"/>
    <property type="match status" value="1"/>
</dbReference>
<dbReference type="FunFam" id="1.10.287.80:FF:000001">
    <property type="entry name" value="ATP synthase gamma chain"/>
    <property type="match status" value="1"/>
</dbReference>
<dbReference type="FunFam" id="1.10.287.80:FF:000003">
    <property type="entry name" value="ATP synthase gamma chain, chloroplastic"/>
    <property type="match status" value="1"/>
</dbReference>
<dbReference type="Gene3D" id="3.40.1380.10">
    <property type="match status" value="1"/>
</dbReference>
<dbReference type="Gene3D" id="1.10.287.80">
    <property type="entry name" value="ATP synthase, gamma subunit, helix hairpin domain"/>
    <property type="match status" value="1"/>
</dbReference>
<dbReference type="HAMAP" id="MF_00815">
    <property type="entry name" value="ATP_synth_gamma_bact"/>
    <property type="match status" value="1"/>
</dbReference>
<dbReference type="InterPro" id="IPR035968">
    <property type="entry name" value="ATP_synth_F1_ATPase_gsu"/>
</dbReference>
<dbReference type="InterPro" id="IPR000131">
    <property type="entry name" value="ATP_synth_F1_gsu"/>
</dbReference>
<dbReference type="InterPro" id="IPR023632">
    <property type="entry name" value="ATP_synth_F1_gsu_CS"/>
</dbReference>
<dbReference type="NCBIfam" id="TIGR01146">
    <property type="entry name" value="ATPsyn_F1gamma"/>
    <property type="match status" value="1"/>
</dbReference>
<dbReference type="NCBIfam" id="NF004146">
    <property type="entry name" value="PRK05621.1-4"/>
    <property type="match status" value="1"/>
</dbReference>
<dbReference type="PANTHER" id="PTHR11693">
    <property type="entry name" value="ATP SYNTHASE GAMMA CHAIN"/>
    <property type="match status" value="1"/>
</dbReference>
<dbReference type="PANTHER" id="PTHR11693:SF22">
    <property type="entry name" value="ATP SYNTHASE SUBUNIT GAMMA, MITOCHONDRIAL"/>
    <property type="match status" value="1"/>
</dbReference>
<dbReference type="Pfam" id="PF00231">
    <property type="entry name" value="ATP-synt"/>
    <property type="match status" value="1"/>
</dbReference>
<dbReference type="PIRSF" id="PIRSF039089">
    <property type="entry name" value="ATP_synthase_gamma"/>
    <property type="match status" value="1"/>
</dbReference>
<dbReference type="PRINTS" id="PR00126">
    <property type="entry name" value="ATPASEGAMMA"/>
</dbReference>
<dbReference type="SUPFAM" id="SSF52943">
    <property type="entry name" value="ATP synthase (F1-ATPase), gamma subunit"/>
    <property type="match status" value="1"/>
</dbReference>
<dbReference type="PROSITE" id="PS00153">
    <property type="entry name" value="ATPASE_GAMMA"/>
    <property type="match status" value="1"/>
</dbReference>
<name>ATPG_BRUME</name>